<comment type="function">
    <text evidence="1">Catalyzes the transfer of a phosphate group to glutamate to form L-glutamate 5-phosphate.</text>
</comment>
<comment type="catalytic activity">
    <reaction evidence="1">
        <text>L-glutamate + ATP = L-glutamyl 5-phosphate + ADP</text>
        <dbReference type="Rhea" id="RHEA:14877"/>
        <dbReference type="ChEBI" id="CHEBI:29985"/>
        <dbReference type="ChEBI" id="CHEBI:30616"/>
        <dbReference type="ChEBI" id="CHEBI:58274"/>
        <dbReference type="ChEBI" id="CHEBI:456216"/>
        <dbReference type="EC" id="2.7.2.11"/>
    </reaction>
</comment>
<comment type="pathway">
    <text evidence="1">Amino-acid biosynthesis; L-proline biosynthesis; L-glutamate 5-semialdehyde from L-glutamate: step 1/2.</text>
</comment>
<comment type="subcellular location">
    <subcellularLocation>
        <location evidence="1">Cytoplasm</location>
    </subcellularLocation>
</comment>
<comment type="similarity">
    <text evidence="1">Belongs to the glutamate 5-kinase family.</text>
</comment>
<keyword id="KW-0028">Amino-acid biosynthesis</keyword>
<keyword id="KW-0067">ATP-binding</keyword>
<keyword id="KW-0963">Cytoplasm</keyword>
<keyword id="KW-0418">Kinase</keyword>
<keyword id="KW-0547">Nucleotide-binding</keyword>
<keyword id="KW-0641">Proline biosynthesis</keyword>
<keyword id="KW-0808">Transferase</keyword>
<evidence type="ECO:0000255" key="1">
    <source>
        <dbReference type="HAMAP-Rule" id="MF_00456"/>
    </source>
</evidence>
<sequence length="367" mass="39302">MNSSQTLVIKLGTSVLTGGSRRLNRAHIVELVRQCAPLHAAGHRIIIVTSGAIAAGREYLNYPELPATIASKQLLAAVGQSRLIQFWEQLFSLYNIHIGQMLLTRADMEDRERFLNARDTLRALLDNGIVPVINENDAVATAEIKVGDNDNLSALVAILADADKLLLLTDQPGLFSADPRTNPDAELIREVEGINDALRKMAGGSVSGLGTGGMETKLQAAEVANRAGIEVVIAAGGKPGVIGDMMAGASVGTRFHGQKMPLESRKRWLFGPPPAGDITVDDGALKAILQRGSSLLPKGILAVEGDFSRGIVVRIRSTDGRDIAHGVSRYNSDALRMIAGHHSQDISDILGYEYGPVVIHRDDMILC</sequence>
<protein>
    <recommendedName>
        <fullName evidence="1">Glutamate 5-kinase</fullName>
        <ecNumber evidence="1">2.7.2.11</ecNumber>
    </recommendedName>
    <alternativeName>
        <fullName evidence="1">Gamma-glutamyl kinase</fullName>
        <shortName evidence="1">GK</shortName>
    </alternativeName>
</protein>
<reference key="1">
    <citation type="journal article" date="2006" name="Genome Res.">
        <title>Massive genome erosion and functional adaptations provide insights into the symbiotic lifestyle of Sodalis glossinidius in the tsetse host.</title>
        <authorList>
            <person name="Toh H."/>
            <person name="Weiss B.L."/>
            <person name="Perkin S.A.H."/>
            <person name="Yamashita A."/>
            <person name="Oshima K."/>
            <person name="Hattori M."/>
            <person name="Aksoy S."/>
        </authorList>
    </citation>
    <scope>NUCLEOTIDE SEQUENCE [LARGE SCALE GENOMIC DNA]</scope>
    <source>
        <strain>morsitans</strain>
    </source>
</reference>
<dbReference type="EC" id="2.7.2.11" evidence="1"/>
<dbReference type="EMBL" id="AP008232">
    <property type="protein sequence ID" value="BAE73875.1"/>
    <property type="molecule type" value="Genomic_DNA"/>
</dbReference>
<dbReference type="RefSeq" id="WP_011410353.1">
    <property type="nucleotide sequence ID" value="NC_007712.1"/>
</dbReference>
<dbReference type="SMR" id="Q2NVF0"/>
<dbReference type="STRING" id="343509.SG0600"/>
<dbReference type="KEGG" id="sgl:SG0600"/>
<dbReference type="eggNOG" id="COG0263">
    <property type="taxonomic scope" value="Bacteria"/>
</dbReference>
<dbReference type="HOGENOM" id="CLU_025400_2_0_6"/>
<dbReference type="OrthoDB" id="9804434at2"/>
<dbReference type="BioCyc" id="SGLO343509:SGP1_RS05155-MONOMER"/>
<dbReference type="UniPathway" id="UPA00098">
    <property type="reaction ID" value="UER00359"/>
</dbReference>
<dbReference type="Proteomes" id="UP000001932">
    <property type="component" value="Chromosome"/>
</dbReference>
<dbReference type="GO" id="GO:0005829">
    <property type="term" value="C:cytosol"/>
    <property type="evidence" value="ECO:0007669"/>
    <property type="project" value="TreeGrafter"/>
</dbReference>
<dbReference type="GO" id="GO:0005524">
    <property type="term" value="F:ATP binding"/>
    <property type="evidence" value="ECO:0007669"/>
    <property type="project" value="UniProtKB-KW"/>
</dbReference>
<dbReference type="GO" id="GO:0004349">
    <property type="term" value="F:glutamate 5-kinase activity"/>
    <property type="evidence" value="ECO:0007669"/>
    <property type="project" value="UniProtKB-UniRule"/>
</dbReference>
<dbReference type="GO" id="GO:0003723">
    <property type="term" value="F:RNA binding"/>
    <property type="evidence" value="ECO:0007669"/>
    <property type="project" value="InterPro"/>
</dbReference>
<dbReference type="GO" id="GO:0055129">
    <property type="term" value="P:L-proline biosynthetic process"/>
    <property type="evidence" value="ECO:0007669"/>
    <property type="project" value="UniProtKB-UniRule"/>
</dbReference>
<dbReference type="CDD" id="cd04242">
    <property type="entry name" value="AAK_G5K_ProB"/>
    <property type="match status" value="1"/>
</dbReference>
<dbReference type="CDD" id="cd21157">
    <property type="entry name" value="PUA_G5K"/>
    <property type="match status" value="1"/>
</dbReference>
<dbReference type="FunFam" id="2.30.130.10:FF:000003">
    <property type="entry name" value="Glutamate 5-kinase"/>
    <property type="match status" value="1"/>
</dbReference>
<dbReference type="FunFam" id="3.40.1160.10:FF:000006">
    <property type="entry name" value="Glutamate 5-kinase"/>
    <property type="match status" value="1"/>
</dbReference>
<dbReference type="Gene3D" id="3.40.1160.10">
    <property type="entry name" value="Acetylglutamate kinase-like"/>
    <property type="match status" value="1"/>
</dbReference>
<dbReference type="Gene3D" id="2.30.130.10">
    <property type="entry name" value="PUA domain"/>
    <property type="match status" value="1"/>
</dbReference>
<dbReference type="HAMAP" id="MF_00456">
    <property type="entry name" value="ProB"/>
    <property type="match status" value="1"/>
</dbReference>
<dbReference type="InterPro" id="IPR036393">
    <property type="entry name" value="AceGlu_kinase-like_sf"/>
</dbReference>
<dbReference type="InterPro" id="IPR001048">
    <property type="entry name" value="Asp/Glu/Uridylate_kinase"/>
</dbReference>
<dbReference type="InterPro" id="IPR041739">
    <property type="entry name" value="G5K_ProB"/>
</dbReference>
<dbReference type="InterPro" id="IPR001057">
    <property type="entry name" value="Glu/AcGlu_kinase"/>
</dbReference>
<dbReference type="InterPro" id="IPR011529">
    <property type="entry name" value="Glu_5kinase"/>
</dbReference>
<dbReference type="InterPro" id="IPR005715">
    <property type="entry name" value="Glu_5kinase/COase_Synthase"/>
</dbReference>
<dbReference type="InterPro" id="IPR019797">
    <property type="entry name" value="Glutamate_5-kinase_CS"/>
</dbReference>
<dbReference type="InterPro" id="IPR002478">
    <property type="entry name" value="PUA"/>
</dbReference>
<dbReference type="InterPro" id="IPR015947">
    <property type="entry name" value="PUA-like_sf"/>
</dbReference>
<dbReference type="InterPro" id="IPR036974">
    <property type="entry name" value="PUA_sf"/>
</dbReference>
<dbReference type="NCBIfam" id="TIGR01027">
    <property type="entry name" value="proB"/>
    <property type="match status" value="1"/>
</dbReference>
<dbReference type="PANTHER" id="PTHR43654">
    <property type="entry name" value="GLUTAMATE 5-KINASE"/>
    <property type="match status" value="1"/>
</dbReference>
<dbReference type="PANTHER" id="PTHR43654:SF1">
    <property type="entry name" value="ISOPENTENYL PHOSPHATE KINASE"/>
    <property type="match status" value="1"/>
</dbReference>
<dbReference type="Pfam" id="PF00696">
    <property type="entry name" value="AA_kinase"/>
    <property type="match status" value="1"/>
</dbReference>
<dbReference type="Pfam" id="PF01472">
    <property type="entry name" value="PUA"/>
    <property type="match status" value="1"/>
</dbReference>
<dbReference type="PIRSF" id="PIRSF000729">
    <property type="entry name" value="GK"/>
    <property type="match status" value="1"/>
</dbReference>
<dbReference type="PRINTS" id="PR00474">
    <property type="entry name" value="GLU5KINASE"/>
</dbReference>
<dbReference type="SMART" id="SM00359">
    <property type="entry name" value="PUA"/>
    <property type="match status" value="1"/>
</dbReference>
<dbReference type="SUPFAM" id="SSF53633">
    <property type="entry name" value="Carbamate kinase-like"/>
    <property type="match status" value="1"/>
</dbReference>
<dbReference type="SUPFAM" id="SSF88697">
    <property type="entry name" value="PUA domain-like"/>
    <property type="match status" value="1"/>
</dbReference>
<dbReference type="PROSITE" id="PS00902">
    <property type="entry name" value="GLUTAMATE_5_KINASE"/>
    <property type="match status" value="1"/>
</dbReference>
<dbReference type="PROSITE" id="PS50890">
    <property type="entry name" value="PUA"/>
    <property type="match status" value="1"/>
</dbReference>
<proteinExistence type="inferred from homology"/>
<name>PROB_SODGM</name>
<accession>Q2NVF0</accession>
<feature type="chain" id="PRO_0000253002" description="Glutamate 5-kinase">
    <location>
        <begin position="1"/>
        <end position="367"/>
    </location>
</feature>
<feature type="domain" description="PUA" evidence="1">
    <location>
        <begin position="275"/>
        <end position="353"/>
    </location>
</feature>
<feature type="binding site" evidence="1">
    <location>
        <position position="10"/>
    </location>
    <ligand>
        <name>ATP</name>
        <dbReference type="ChEBI" id="CHEBI:30616"/>
    </ligand>
</feature>
<feature type="binding site" evidence="1">
    <location>
        <position position="50"/>
    </location>
    <ligand>
        <name>substrate</name>
    </ligand>
</feature>
<feature type="binding site" evidence="1">
    <location>
        <position position="137"/>
    </location>
    <ligand>
        <name>substrate</name>
    </ligand>
</feature>
<feature type="binding site" evidence="1">
    <location>
        <position position="149"/>
    </location>
    <ligand>
        <name>substrate</name>
    </ligand>
</feature>
<feature type="binding site" evidence="1">
    <location>
        <begin position="169"/>
        <end position="170"/>
    </location>
    <ligand>
        <name>ATP</name>
        <dbReference type="ChEBI" id="CHEBI:30616"/>
    </ligand>
</feature>
<feature type="binding site" evidence="1">
    <location>
        <begin position="211"/>
        <end position="217"/>
    </location>
    <ligand>
        <name>ATP</name>
        <dbReference type="ChEBI" id="CHEBI:30616"/>
    </ligand>
</feature>
<gene>
    <name evidence="1" type="primary">proB</name>
    <name type="ordered locus">SG0600</name>
</gene>
<organism>
    <name type="scientific">Sodalis glossinidius (strain morsitans)</name>
    <dbReference type="NCBI Taxonomy" id="343509"/>
    <lineage>
        <taxon>Bacteria</taxon>
        <taxon>Pseudomonadati</taxon>
        <taxon>Pseudomonadota</taxon>
        <taxon>Gammaproteobacteria</taxon>
        <taxon>Enterobacterales</taxon>
        <taxon>Bruguierivoracaceae</taxon>
        <taxon>Sodalis</taxon>
    </lineage>
</organism>